<dbReference type="EMBL" id="M19961">
    <property type="protein sequence ID" value="AAA52061.1"/>
    <property type="molecule type" value="mRNA"/>
</dbReference>
<dbReference type="EMBL" id="M59250">
    <property type="protein sequence ID" value="AAA52060.1"/>
    <property type="molecule type" value="Genomic_DNA"/>
</dbReference>
<dbReference type="EMBL" id="BT006742">
    <property type="protein sequence ID" value="AAP35388.1"/>
    <property type="molecule type" value="mRNA"/>
</dbReference>
<dbReference type="EMBL" id="AC017099">
    <property type="protein sequence ID" value="AAY24279.1"/>
    <property type="molecule type" value="Genomic_DNA"/>
</dbReference>
<dbReference type="EMBL" id="BC006229">
    <property type="protein sequence ID" value="AAH06229.1"/>
    <property type="molecule type" value="mRNA"/>
</dbReference>
<dbReference type="EMBL" id="U41284">
    <property type="protein sequence ID" value="AAB19185.1"/>
    <property type="molecule type" value="Genomic_DNA"/>
</dbReference>
<dbReference type="CCDS" id="CCDS2032.1"/>
<dbReference type="PIR" id="JT0324">
    <property type="entry name" value="OTHU5B"/>
</dbReference>
<dbReference type="RefSeq" id="NP_001853.2">
    <property type="nucleotide sequence ID" value="NM_001862.2"/>
</dbReference>
<dbReference type="PDB" id="5Z62">
    <property type="method" value="EM"/>
    <property type="resolution" value="3.60 A"/>
    <property type="chains" value="F=32-129"/>
</dbReference>
<dbReference type="PDBsum" id="5Z62"/>
<dbReference type="SMR" id="P10606"/>
<dbReference type="BioGRID" id="107722">
    <property type="interactions" value="164"/>
</dbReference>
<dbReference type="ComplexPortal" id="CPX-6123">
    <property type="entry name" value="Mitochondrial respiratory chain complex IV"/>
</dbReference>
<dbReference type="CORUM" id="P10606"/>
<dbReference type="FunCoup" id="P10606">
    <property type="interactions" value="1560"/>
</dbReference>
<dbReference type="IntAct" id="P10606">
    <property type="interactions" value="112"/>
</dbReference>
<dbReference type="MINT" id="P10606"/>
<dbReference type="STRING" id="9606.ENSP00000258424"/>
<dbReference type="DrugBank" id="DB02659">
    <property type="generic name" value="Cholic Acid"/>
</dbReference>
<dbReference type="DrugBank" id="DB04464">
    <property type="generic name" value="N-Formylmethionine"/>
</dbReference>
<dbReference type="TCDB" id="3.D.4.11.1">
    <property type="family name" value="the proton-translocating cytochrome oxidase (cox) superfamily"/>
</dbReference>
<dbReference type="iPTMnet" id="P10606"/>
<dbReference type="PhosphoSitePlus" id="P10606"/>
<dbReference type="SwissPalm" id="P10606"/>
<dbReference type="BioMuta" id="COX5B"/>
<dbReference type="DMDM" id="20141332"/>
<dbReference type="jPOST" id="P10606"/>
<dbReference type="MassIVE" id="P10606"/>
<dbReference type="PaxDb" id="9606-ENSP00000258424"/>
<dbReference type="PeptideAtlas" id="P10606"/>
<dbReference type="ProteomicsDB" id="52618"/>
<dbReference type="Pumba" id="P10606"/>
<dbReference type="TopDownProteomics" id="P10606"/>
<dbReference type="Antibodypedia" id="32635">
    <property type="antibodies" value="373 antibodies from 36 providers"/>
</dbReference>
<dbReference type="DNASU" id="1329"/>
<dbReference type="Ensembl" id="ENST00000258424.3">
    <property type="protein sequence ID" value="ENSP00000258424.2"/>
    <property type="gene ID" value="ENSG00000135940.7"/>
</dbReference>
<dbReference type="Ensembl" id="ENST00000708077.1">
    <property type="protein sequence ID" value="ENSP00000517083.1"/>
    <property type="gene ID" value="ENSG00000291596.1"/>
</dbReference>
<dbReference type="GeneID" id="1329"/>
<dbReference type="KEGG" id="hsa:1329"/>
<dbReference type="MANE-Select" id="ENST00000258424.3">
    <property type="protein sequence ID" value="ENSP00000258424.2"/>
    <property type="RefSeq nucleotide sequence ID" value="NM_001862.3"/>
    <property type="RefSeq protein sequence ID" value="NP_001853.2"/>
</dbReference>
<dbReference type="UCSC" id="uc002sya.4">
    <property type="organism name" value="human"/>
</dbReference>
<dbReference type="AGR" id="HGNC:2269"/>
<dbReference type="CTD" id="1329"/>
<dbReference type="DisGeNET" id="1329"/>
<dbReference type="GeneCards" id="COX5B"/>
<dbReference type="HGNC" id="HGNC:2269">
    <property type="gene designation" value="COX5B"/>
</dbReference>
<dbReference type="HPA" id="ENSG00000135940">
    <property type="expression patterns" value="Tissue enhanced (heart muscle, skeletal muscle)"/>
</dbReference>
<dbReference type="MalaCards" id="COX5B"/>
<dbReference type="MIM" id="123866">
    <property type="type" value="gene"/>
</dbReference>
<dbReference type="neXtProt" id="NX_P10606"/>
<dbReference type="OpenTargets" id="ENSG00000135940"/>
<dbReference type="PharmGKB" id="PA26786"/>
<dbReference type="VEuPathDB" id="HostDB:ENSG00000135940"/>
<dbReference type="eggNOG" id="KOG3352">
    <property type="taxonomic scope" value="Eukaryota"/>
</dbReference>
<dbReference type="GeneTree" id="ENSGT00390000011010"/>
<dbReference type="HOGENOM" id="CLU_127178_0_0_1"/>
<dbReference type="InParanoid" id="P10606"/>
<dbReference type="OMA" id="ACFCEPD"/>
<dbReference type="OrthoDB" id="10249250at2759"/>
<dbReference type="PAN-GO" id="P10606">
    <property type="GO annotations" value="1 GO annotation based on evolutionary models"/>
</dbReference>
<dbReference type="PhylomeDB" id="P10606"/>
<dbReference type="TreeFam" id="TF105063"/>
<dbReference type="BioCyc" id="MetaCyc:HS06090-MONOMER"/>
<dbReference type="PathwayCommons" id="P10606"/>
<dbReference type="Reactome" id="R-HSA-5628897">
    <property type="pathway name" value="TP53 Regulates Metabolic Genes"/>
</dbReference>
<dbReference type="Reactome" id="R-HSA-611105">
    <property type="pathway name" value="Respiratory electron transport"/>
</dbReference>
<dbReference type="Reactome" id="R-HSA-9707564">
    <property type="pathway name" value="Cytoprotection by HMOX1"/>
</dbReference>
<dbReference type="Reactome" id="R-HSA-9837999">
    <property type="pathway name" value="Mitochondrial protein degradation"/>
</dbReference>
<dbReference type="Reactome" id="R-HSA-9864848">
    <property type="pathway name" value="Complex IV assembly"/>
</dbReference>
<dbReference type="SignaLink" id="P10606"/>
<dbReference type="SIGNOR" id="P10606"/>
<dbReference type="UniPathway" id="UPA00705"/>
<dbReference type="BioGRID-ORCS" id="1329">
    <property type="hits" value="355 hits in 1168 CRISPR screens"/>
</dbReference>
<dbReference type="CD-CODE" id="FB4E32DD">
    <property type="entry name" value="Presynaptic clusters and postsynaptic densities"/>
</dbReference>
<dbReference type="ChiTaRS" id="COX5B">
    <property type="organism name" value="human"/>
</dbReference>
<dbReference type="GeneWiki" id="COX5B"/>
<dbReference type="GenomeRNAi" id="1329"/>
<dbReference type="Pharos" id="P10606">
    <property type="development level" value="Tbio"/>
</dbReference>
<dbReference type="PRO" id="PR:P10606"/>
<dbReference type="Proteomes" id="UP000005640">
    <property type="component" value="Chromosome 2"/>
</dbReference>
<dbReference type="RNAct" id="P10606">
    <property type="molecule type" value="protein"/>
</dbReference>
<dbReference type="Bgee" id="ENSG00000135940">
    <property type="expression patterns" value="Expressed in heart right ventricle and 210 other cell types or tissues"/>
</dbReference>
<dbReference type="ExpressionAtlas" id="P10606">
    <property type="expression patterns" value="baseline and differential"/>
</dbReference>
<dbReference type="GO" id="GO:0005743">
    <property type="term" value="C:mitochondrial inner membrane"/>
    <property type="evidence" value="ECO:0000304"/>
    <property type="project" value="Reactome"/>
</dbReference>
<dbReference type="GO" id="GO:0031966">
    <property type="term" value="C:mitochondrial membrane"/>
    <property type="evidence" value="ECO:0000314"/>
    <property type="project" value="ComplexPortal"/>
</dbReference>
<dbReference type="GO" id="GO:0005739">
    <property type="term" value="C:mitochondrion"/>
    <property type="evidence" value="ECO:0000314"/>
    <property type="project" value="HPA"/>
</dbReference>
<dbReference type="GO" id="GO:0045277">
    <property type="term" value="C:respiratory chain complex IV"/>
    <property type="evidence" value="ECO:0007669"/>
    <property type="project" value="InterPro"/>
</dbReference>
<dbReference type="GO" id="GO:0004129">
    <property type="term" value="F:cytochrome-c oxidase activity"/>
    <property type="evidence" value="ECO:0000304"/>
    <property type="project" value="ProtInc"/>
</dbReference>
<dbReference type="GO" id="GO:0046872">
    <property type="term" value="F:metal ion binding"/>
    <property type="evidence" value="ECO:0007669"/>
    <property type="project" value="UniProtKB-KW"/>
</dbReference>
<dbReference type="GO" id="GO:0045333">
    <property type="term" value="P:cellular respiration"/>
    <property type="evidence" value="ECO:0000303"/>
    <property type="project" value="ComplexPortal"/>
</dbReference>
<dbReference type="GO" id="GO:0006123">
    <property type="term" value="P:mitochondrial electron transport, cytochrome c to oxygen"/>
    <property type="evidence" value="ECO:0000318"/>
    <property type="project" value="GO_Central"/>
</dbReference>
<dbReference type="GO" id="GO:0007585">
    <property type="term" value="P:respiratory gaseous exchange by respiratory system"/>
    <property type="evidence" value="ECO:0000304"/>
    <property type="project" value="ProtInc"/>
</dbReference>
<dbReference type="CDD" id="cd00924">
    <property type="entry name" value="Cyt_c_Oxidase_Vb"/>
    <property type="match status" value="1"/>
</dbReference>
<dbReference type="FunFam" id="2.60.11.10:FF:000001">
    <property type="entry name" value="Cytochrome c oxidase subunit 5B, mitochondrial"/>
    <property type="match status" value="1"/>
</dbReference>
<dbReference type="Gene3D" id="2.60.11.10">
    <property type="entry name" value="Cytochrome c oxidase, subunit Vb"/>
    <property type="match status" value="1"/>
</dbReference>
<dbReference type="InterPro" id="IPR002124">
    <property type="entry name" value="Cyt_c_oxidase_su5b"/>
</dbReference>
<dbReference type="InterPro" id="IPR036972">
    <property type="entry name" value="Cyt_c_oxidase_su5b_sf"/>
</dbReference>
<dbReference type="PANTHER" id="PTHR10122">
    <property type="entry name" value="CYTOCHROME C OXIDASE SUBUNIT 5B, MITOCHONDRIAL"/>
    <property type="match status" value="1"/>
</dbReference>
<dbReference type="PANTHER" id="PTHR10122:SF20">
    <property type="entry name" value="CYTOCHROME C OXIDASE SUBUNIT 5B, MITOCHONDRIAL"/>
    <property type="match status" value="1"/>
</dbReference>
<dbReference type="Pfam" id="PF01215">
    <property type="entry name" value="COX5B"/>
    <property type="match status" value="1"/>
</dbReference>
<dbReference type="SUPFAM" id="SSF57802">
    <property type="entry name" value="Rubredoxin-like"/>
    <property type="match status" value="1"/>
</dbReference>
<dbReference type="PROSITE" id="PS00848">
    <property type="entry name" value="COX5B_1"/>
    <property type="match status" value="1"/>
</dbReference>
<dbReference type="PROSITE" id="PS51359">
    <property type="entry name" value="COX5B_2"/>
    <property type="match status" value="1"/>
</dbReference>
<reference key="1">
    <citation type="journal article" date="1988" name="Gene">
        <title>Sequence of cDNAs encoding subunit Vb of human and bovine cytochrome c oxidase.</title>
        <authorList>
            <person name="Zeviani M."/>
            <person name="Sakoda S."/>
            <person name="Sherbany A."/>
            <person name="Nakase H."/>
            <person name="Rizzuto R."/>
            <person name="Samitt C.E."/>
            <person name="Dimauro S."/>
            <person name="Schon E.A."/>
        </authorList>
    </citation>
    <scope>NUCLEOTIDE SEQUENCE [MRNA]</scope>
</reference>
<reference key="2">
    <citation type="journal article" date="1991" name="Genomics">
        <title>Structure of the human cytochrome c oxidase subunit Vb gene and chromosomal mapping of the coding gene and of seven pseudogenes.</title>
        <authorList>
            <person name="Lomax M.I."/>
            <person name="Hsieh C.L."/>
            <person name="Darras B.T."/>
            <person name="Francke U."/>
        </authorList>
    </citation>
    <scope>NUCLEOTIDE SEQUENCE [GENOMIC DNA]</scope>
</reference>
<reference key="3">
    <citation type="submission" date="2003-05" db="EMBL/GenBank/DDBJ databases">
        <title>Cloning of human full-length CDSs in BD Creator(TM) system donor vector.</title>
        <authorList>
            <person name="Kalnine N."/>
            <person name="Chen X."/>
            <person name="Rolfs A."/>
            <person name="Halleck A."/>
            <person name="Hines L."/>
            <person name="Eisenstein S."/>
            <person name="Koundinya M."/>
            <person name="Raphael J."/>
            <person name="Moreira D."/>
            <person name="Kelley T."/>
            <person name="LaBaer J."/>
            <person name="Lin Y."/>
            <person name="Phelan M."/>
            <person name="Farmer A."/>
        </authorList>
    </citation>
    <scope>NUCLEOTIDE SEQUENCE [LARGE SCALE MRNA]</scope>
</reference>
<reference key="4">
    <citation type="journal article" date="2005" name="Nature">
        <title>Generation and annotation of the DNA sequences of human chromosomes 2 and 4.</title>
        <authorList>
            <person name="Hillier L.W."/>
            <person name="Graves T.A."/>
            <person name="Fulton R.S."/>
            <person name="Fulton L.A."/>
            <person name="Pepin K.H."/>
            <person name="Minx P."/>
            <person name="Wagner-McPherson C."/>
            <person name="Layman D."/>
            <person name="Wylie K."/>
            <person name="Sekhon M."/>
            <person name="Becker M.C."/>
            <person name="Fewell G.A."/>
            <person name="Delehaunty K.D."/>
            <person name="Miner T.L."/>
            <person name="Nash W.E."/>
            <person name="Kremitzki C."/>
            <person name="Oddy L."/>
            <person name="Du H."/>
            <person name="Sun H."/>
            <person name="Bradshaw-Cordum H."/>
            <person name="Ali J."/>
            <person name="Carter J."/>
            <person name="Cordes M."/>
            <person name="Harris A."/>
            <person name="Isak A."/>
            <person name="van Brunt A."/>
            <person name="Nguyen C."/>
            <person name="Du F."/>
            <person name="Courtney L."/>
            <person name="Kalicki J."/>
            <person name="Ozersky P."/>
            <person name="Abbott S."/>
            <person name="Armstrong J."/>
            <person name="Belter E.A."/>
            <person name="Caruso L."/>
            <person name="Cedroni M."/>
            <person name="Cotton M."/>
            <person name="Davidson T."/>
            <person name="Desai A."/>
            <person name="Elliott G."/>
            <person name="Erb T."/>
            <person name="Fronick C."/>
            <person name="Gaige T."/>
            <person name="Haakenson W."/>
            <person name="Haglund K."/>
            <person name="Holmes A."/>
            <person name="Harkins R."/>
            <person name="Kim K."/>
            <person name="Kruchowski S.S."/>
            <person name="Strong C.M."/>
            <person name="Grewal N."/>
            <person name="Goyea E."/>
            <person name="Hou S."/>
            <person name="Levy A."/>
            <person name="Martinka S."/>
            <person name="Mead K."/>
            <person name="McLellan M.D."/>
            <person name="Meyer R."/>
            <person name="Randall-Maher J."/>
            <person name="Tomlinson C."/>
            <person name="Dauphin-Kohlberg S."/>
            <person name="Kozlowicz-Reilly A."/>
            <person name="Shah N."/>
            <person name="Swearengen-Shahid S."/>
            <person name="Snider J."/>
            <person name="Strong J.T."/>
            <person name="Thompson J."/>
            <person name="Yoakum M."/>
            <person name="Leonard S."/>
            <person name="Pearman C."/>
            <person name="Trani L."/>
            <person name="Radionenko M."/>
            <person name="Waligorski J.E."/>
            <person name="Wang C."/>
            <person name="Rock S.M."/>
            <person name="Tin-Wollam A.-M."/>
            <person name="Maupin R."/>
            <person name="Latreille P."/>
            <person name="Wendl M.C."/>
            <person name="Yang S.-P."/>
            <person name="Pohl C."/>
            <person name="Wallis J.W."/>
            <person name="Spieth J."/>
            <person name="Bieri T.A."/>
            <person name="Berkowicz N."/>
            <person name="Nelson J.O."/>
            <person name="Osborne J."/>
            <person name="Ding L."/>
            <person name="Meyer R."/>
            <person name="Sabo A."/>
            <person name="Shotland Y."/>
            <person name="Sinha P."/>
            <person name="Wohldmann P.E."/>
            <person name="Cook L.L."/>
            <person name="Hickenbotham M.T."/>
            <person name="Eldred J."/>
            <person name="Williams D."/>
            <person name="Jones T.A."/>
            <person name="She X."/>
            <person name="Ciccarelli F.D."/>
            <person name="Izaurralde E."/>
            <person name="Taylor J."/>
            <person name="Schmutz J."/>
            <person name="Myers R.M."/>
            <person name="Cox D.R."/>
            <person name="Huang X."/>
            <person name="McPherson J.D."/>
            <person name="Mardis E.R."/>
            <person name="Clifton S.W."/>
            <person name="Warren W.C."/>
            <person name="Chinwalla A.T."/>
            <person name="Eddy S.R."/>
            <person name="Marra M.A."/>
            <person name="Ovcharenko I."/>
            <person name="Furey T.S."/>
            <person name="Miller W."/>
            <person name="Eichler E.E."/>
            <person name="Bork P."/>
            <person name="Suyama M."/>
            <person name="Torrents D."/>
            <person name="Waterston R.H."/>
            <person name="Wilson R.K."/>
        </authorList>
    </citation>
    <scope>NUCLEOTIDE SEQUENCE [LARGE SCALE GENOMIC DNA]</scope>
</reference>
<reference key="5">
    <citation type="journal article" date="2004" name="Genome Res.">
        <title>The status, quality, and expansion of the NIH full-length cDNA project: the Mammalian Gene Collection (MGC).</title>
        <authorList>
            <consortium name="The MGC Project Team"/>
        </authorList>
    </citation>
    <scope>NUCLEOTIDE SEQUENCE [LARGE SCALE MRNA]</scope>
    <source>
        <tissue>Skin</tissue>
    </source>
</reference>
<reference key="6">
    <citation type="journal article" date="1996" name="Arch. Biochem. Biophys.">
        <title>Phylogenetic footprinting of the human cytochrome c oxidase subunit VB promoter.</title>
        <authorList>
            <person name="Bachman N.J."/>
            <person name="Yang T.L."/>
            <person name="Dasen J.S."/>
            <person name="Ernst R.E."/>
            <person name="Lomax M.I."/>
        </authorList>
    </citation>
    <scope>NUCLEOTIDE SEQUENCE [GENOMIC DNA] OF 1-37</scope>
</reference>
<reference key="7">
    <citation type="journal article" date="1993" name="Electrophoresis">
        <title>Human liver protein map: update 1993.</title>
        <authorList>
            <person name="Hughes G.J."/>
            <person name="Frutiger S."/>
            <person name="Paquet N."/>
            <person name="Pasquali C."/>
            <person name="Sanchez J.-C."/>
            <person name="Tissot J.-D."/>
            <person name="Bairoch A."/>
            <person name="Appel R.D."/>
            <person name="Hochstrasser D.F."/>
        </authorList>
    </citation>
    <scope>PROTEIN SEQUENCE OF 32-44</scope>
    <source>
        <tissue>Liver</tissue>
    </source>
</reference>
<reference key="8">
    <citation type="journal article" date="2011" name="BMC Syst. Biol.">
        <title>Initial characterization of the human central proteome.</title>
        <authorList>
            <person name="Burkard T.R."/>
            <person name="Planyavsky M."/>
            <person name="Kaupe I."/>
            <person name="Breitwieser F.P."/>
            <person name="Buerckstuemmer T."/>
            <person name="Bennett K.L."/>
            <person name="Superti-Furga G."/>
            <person name="Colinge J."/>
        </authorList>
    </citation>
    <scope>IDENTIFICATION BY MASS SPECTROMETRY [LARGE SCALE ANALYSIS]</scope>
</reference>
<reference key="9">
    <citation type="journal article" date="2014" name="J. Proteomics">
        <title>An enzyme assisted RP-RPLC approach for in-depth analysis of human liver phosphoproteome.</title>
        <authorList>
            <person name="Bian Y."/>
            <person name="Song C."/>
            <person name="Cheng K."/>
            <person name="Dong M."/>
            <person name="Wang F."/>
            <person name="Huang J."/>
            <person name="Sun D."/>
            <person name="Wang L."/>
            <person name="Ye M."/>
            <person name="Zou H."/>
        </authorList>
    </citation>
    <scope>IDENTIFICATION BY MASS SPECTROMETRY [LARGE SCALE ANALYSIS]</scope>
    <source>
        <tissue>Liver</tissue>
    </source>
</reference>
<reference key="10">
    <citation type="journal article" date="2015" name="Proteomics">
        <title>N-terminome analysis of the human mitochondrial proteome.</title>
        <authorList>
            <person name="Vaca Jacome A.S."/>
            <person name="Rabilloud T."/>
            <person name="Schaeffer-Reiss C."/>
            <person name="Rompais M."/>
            <person name="Ayoub D."/>
            <person name="Lane L."/>
            <person name="Bairoch A."/>
            <person name="Van Dorsselaer A."/>
            <person name="Carapito C."/>
        </authorList>
    </citation>
    <scope>CLEAVAGE OF TRANSIT PEPTIDE [LARGE SCALE ANALYSIS] AFTER MET-31</scope>
    <scope>IDENTIFICATION BY MASS SPECTROMETRY [LARGE SCALE ANALYSIS]</scope>
</reference>
<reference key="11">
    <citation type="journal article" date="2017" name="Cell">
        <title>Architecture of human mitochondrial respiratory megacomplex I2III2IV2.</title>
        <authorList>
            <person name="Guo R."/>
            <person name="Zong S."/>
            <person name="Wu M."/>
            <person name="Gu J."/>
            <person name="Yang M."/>
        </authorList>
    </citation>
    <scope>STRUCTURE BY ELECTRON MICROSCOPY (3.90 ANGSTROMS)</scope>
    <scope>SUBUNIT</scope>
</reference>
<reference key="12">
    <citation type="journal article" date="2018" name="Cell Res.">
        <title>Structure of the intact 14-subunit human cytochrome c oxidase.</title>
        <authorList>
            <person name="Zong S."/>
            <person name="Wu M."/>
            <person name="Gu J."/>
            <person name="Liu T."/>
            <person name="Guo R."/>
            <person name="Yang M."/>
        </authorList>
    </citation>
    <scope>STRUCTURE BY ELECTRON MICROSCOPY (3.60 ANGSTROMS)</scope>
</reference>
<gene>
    <name type="primary">COX5B</name>
</gene>
<name>COX5B_HUMAN</name>
<accession>P10606</accession>
<accession>Q53YB7</accession>
<accession>Q96J18</accession>
<accession>Q99610</accession>
<evidence type="ECO:0000250" key="1">
    <source>
        <dbReference type="UniProtKB" id="P00428"/>
    </source>
</evidence>
<evidence type="ECO:0000250" key="2">
    <source>
        <dbReference type="UniProtKB" id="P04037"/>
    </source>
</evidence>
<evidence type="ECO:0000250" key="3">
    <source>
        <dbReference type="UniProtKB" id="P19536"/>
    </source>
</evidence>
<evidence type="ECO:0000269" key="4">
    <source>
    </source>
</evidence>
<evidence type="ECO:0000269" key="5">
    <source>
    </source>
</evidence>
<evidence type="ECO:0000269" key="6">
    <source>
    </source>
</evidence>
<evidence type="ECO:0000305" key="7"/>
<evidence type="ECO:0007744" key="8">
    <source>
    </source>
</evidence>
<organism>
    <name type="scientific">Homo sapiens</name>
    <name type="common">Human</name>
    <dbReference type="NCBI Taxonomy" id="9606"/>
    <lineage>
        <taxon>Eukaryota</taxon>
        <taxon>Metazoa</taxon>
        <taxon>Chordata</taxon>
        <taxon>Craniata</taxon>
        <taxon>Vertebrata</taxon>
        <taxon>Euteleostomi</taxon>
        <taxon>Mammalia</taxon>
        <taxon>Eutheria</taxon>
        <taxon>Euarchontoglires</taxon>
        <taxon>Primates</taxon>
        <taxon>Haplorrhini</taxon>
        <taxon>Catarrhini</taxon>
        <taxon>Hominidae</taxon>
        <taxon>Homo</taxon>
    </lineage>
</organism>
<comment type="function">
    <text evidence="2">Component of the cytochrome c oxidase, the last enzyme in the mitochondrial electron transport chain which drives oxidative phosphorylation. The respiratory chain contains 3 multisubunit complexes succinate dehydrogenase (complex II, CII), ubiquinol-cytochrome c oxidoreductase (cytochrome b-c1 complex, complex III, CIII) and cytochrome c oxidase (complex IV, CIV), that cooperate to transfer electrons derived from NADH and succinate to molecular oxygen, creating an electrochemical gradient over the inner membrane that drives transmembrane transport and the ATP synthase. Cytochrome c oxidase is the component of the respiratory chain that catalyzes the reduction of oxygen to water. Electrons originating from reduced cytochrome c in the intermembrane space (IMS) are transferred via the dinuclear copper A center (CU(A)) of subunit 2 and heme A of subunit 1 to the active site in subunit 1, a binuclear center (BNC) formed by heme A3 and copper B (CU(B)). The BNC reduces molecular oxygen to 2 water molecules using 4 electrons from cytochrome c in the IMS and 4 protons from the mitochondrial matrix.</text>
</comment>
<comment type="pathway">
    <text evidence="2">Energy metabolism; oxidative phosphorylation.</text>
</comment>
<comment type="subunit">
    <text evidence="4 5">Component of the cytochrome c oxidase (complex IV, CIV), a multisubunit enzyme composed of 14 subunits. The complex is composed of a catalytic core of 3 subunits MT-CO1, MT-CO2 and MT-CO3, encoded in the mitochondrial DNA, and 11 supernumerary subunits COX4I1 (or COX4I2), COX5A, COX5B, COX6A1 (or COX6A2), COX6B1 (or COX6B2), COX6C, COX7A2 (or COX7A1), COX7B, COX7C, COX8A and NDUFA4, which are encoded in the nuclear genome (PubMed:30030519). The complex exists as a monomer or a dimer and forms supercomplexes (SCs) in the inner mitochondrial membrane with NADH-ubiquinone oxidoreductase (complex I, CI) and ubiquinol-cytochrome c oxidoreductase (cytochrome b-c1 complex, complex III, CIII), resulting in different assemblies (supercomplex SCI(1)III(2)IV(1) and megacomplex MCI(2)III(2)IV(2)) (PubMed:28844695).</text>
</comment>
<comment type="interaction">
    <interactant intactId="EBI-1053725">
        <id>P10606</id>
    </interactant>
    <interactant intactId="EBI-948603">
        <id>Q03989</id>
        <label>ARID5A</label>
    </interactant>
    <organismsDiffer>false</organismsDiffer>
    <experiments>3</experiments>
</comment>
<comment type="interaction">
    <interactant intactId="EBI-1053725">
        <id>P10606</id>
    </interactant>
    <interactant intactId="EBI-711810">
        <id>O14503</id>
        <label>BHLHE40</label>
    </interactant>
    <organismsDiffer>false</organismsDiffer>
    <experiments>4</experiments>
</comment>
<comment type="interaction">
    <interactant intactId="EBI-1053725">
        <id>P10606</id>
    </interactant>
    <interactant intactId="EBI-3438291">
        <id>O14613</id>
        <label>CDC42EP2</label>
    </interactant>
    <organismsDiffer>false</organismsDiffer>
    <experiments>3</experiments>
</comment>
<comment type="interaction">
    <interactant intactId="EBI-1053725">
        <id>P10606</id>
    </interactant>
    <interactant intactId="EBI-1181367">
        <id>Q01850</id>
        <label>CDR2</label>
    </interactant>
    <organismsDiffer>false</organismsDiffer>
    <experiments>7</experiments>
</comment>
<comment type="interaction">
    <interactant intactId="EBI-1053725">
        <id>P10606</id>
    </interactant>
    <interactant intactId="EBI-11063830">
        <id>Q86X02</id>
        <label>CDR2L</label>
    </interactant>
    <organismsDiffer>false</organismsDiffer>
    <experiments>3</experiments>
</comment>
<comment type="interaction">
    <interactant intactId="EBI-1053725">
        <id>P10606</id>
    </interactant>
    <interactant intactId="EBI-10694655">
        <id>Q7L591-3</id>
        <label>DOK3</label>
    </interactant>
    <organismsDiffer>false</organismsDiffer>
    <experiments>3</experiments>
</comment>
<comment type="interaction">
    <interactant intactId="EBI-1053725">
        <id>P10606</id>
    </interactant>
    <interactant intactId="EBI-12958227">
        <id>Q86W67</id>
        <label>FAM228A</label>
    </interactant>
    <organismsDiffer>false</organismsDiffer>
    <experiments>3</experiments>
</comment>
<comment type="interaction">
    <interactant intactId="EBI-1053725">
        <id>P10606</id>
    </interactant>
    <interactant intactId="EBI-603643">
        <id>O75955</id>
        <label>FLOT1</label>
    </interactant>
    <organismsDiffer>false</organismsDiffer>
    <experiments>3</experiments>
</comment>
<comment type="interaction">
    <interactant intactId="EBI-1053725">
        <id>P10606</id>
    </interactant>
    <interactant intactId="EBI-618309">
        <id>Q08379</id>
        <label>GOLGA2</label>
    </interactant>
    <organismsDiffer>false</organismsDiffer>
    <experiments>3</experiments>
</comment>
<comment type="interaction">
    <interactant intactId="EBI-1053725">
        <id>P10606</id>
    </interactant>
    <interactant intactId="EBI-466029">
        <id>P42858</id>
        <label>HTT</label>
    </interactant>
    <organismsDiffer>false</organismsDiffer>
    <experiments>7</experiments>
</comment>
<comment type="interaction">
    <interactant intactId="EBI-1053725">
        <id>P10606</id>
    </interactant>
    <interactant intactId="EBI-8638439">
        <id>Q8IYA8</id>
        <label>IHO1</label>
    </interactant>
    <organismsDiffer>false</organismsDiffer>
    <experiments>4</experiments>
</comment>
<comment type="interaction">
    <interactant intactId="EBI-1053725">
        <id>P10606</id>
    </interactant>
    <interactant intactId="EBI-2866431">
        <id>Q9Y287</id>
        <label>ITM2B</label>
    </interactant>
    <organismsDiffer>false</organismsDiffer>
    <experiments>3</experiments>
</comment>
<comment type="interaction">
    <interactant intactId="EBI-1053725">
        <id>P10606</id>
    </interactant>
    <interactant intactId="EBI-739566">
        <id>P19012</id>
        <label>KRT15</label>
    </interactant>
    <organismsDiffer>false</organismsDiffer>
    <experiments>3</experiments>
</comment>
<comment type="interaction">
    <interactant intactId="EBI-1053725">
        <id>P10606</id>
    </interactant>
    <interactant intactId="EBI-3044087">
        <id>Q7Z3Y8</id>
        <label>KRT27</label>
    </interactant>
    <organismsDiffer>false</organismsDiffer>
    <experiments>3</experiments>
</comment>
<comment type="interaction">
    <interactant intactId="EBI-1053725">
        <id>P10606</id>
    </interactant>
    <interactant intactId="EBI-948001">
        <id>Q15323</id>
        <label>KRT31</label>
    </interactant>
    <organismsDiffer>false</organismsDiffer>
    <experiments>3</experiments>
</comment>
<comment type="interaction">
    <interactant intactId="EBI-1053725">
        <id>P10606</id>
    </interactant>
    <interactant intactId="EBI-1049638">
        <id>Q14525</id>
        <label>KRT33B</label>
    </interactant>
    <organismsDiffer>false</organismsDiffer>
    <experiments>3</experiments>
</comment>
<comment type="interaction">
    <interactant intactId="EBI-1053725">
        <id>P10606</id>
    </interactant>
    <interactant intactId="EBI-11987923">
        <id>P59942</id>
        <label>MCCD1</label>
    </interactant>
    <organismsDiffer>false</organismsDiffer>
    <experiments>3</experiments>
</comment>
<comment type="interaction">
    <interactant intactId="EBI-1053725">
        <id>P10606</id>
    </interactant>
    <interactant intactId="EBI-10172526">
        <id>Q9UJV3-2</id>
        <label>MID2</label>
    </interactant>
    <organismsDiffer>false</organismsDiffer>
    <experiments>3</experiments>
</comment>
<comment type="interaction">
    <interactant intactId="EBI-1053725">
        <id>P10606</id>
    </interactant>
    <interactant intactId="EBI-721623">
        <id>Q9UKK9</id>
        <label>NUDT5</label>
    </interactant>
    <organismsDiffer>false</organismsDiffer>
    <experiments>3</experiments>
</comment>
<comment type="interaction">
    <interactant intactId="EBI-1053725">
        <id>P10606</id>
    </interactant>
    <interactant intactId="EBI-536879">
        <id>O43482</id>
        <label>OIP5</label>
    </interactant>
    <organismsDiffer>false</organismsDiffer>
    <experiments>3</experiments>
</comment>
<comment type="interaction">
    <interactant intactId="EBI-1053725">
        <id>P10606</id>
    </interactant>
    <interactant intactId="EBI-742388">
        <id>Q9H8W4</id>
        <label>PLEKHF2</label>
    </interactant>
    <organismsDiffer>false</organismsDiffer>
    <experiments>3</experiments>
</comment>
<comment type="interaction">
    <interactant intactId="EBI-1053725">
        <id>P10606</id>
    </interactant>
    <interactant intactId="EBI-302345">
        <id>Q8ND90</id>
        <label>PNMA1</label>
    </interactant>
    <organismsDiffer>false</organismsDiffer>
    <experiments>3</experiments>
</comment>
<comment type="interaction">
    <interactant intactId="EBI-1053725">
        <id>P10606</id>
    </interactant>
    <interactant intactId="EBI-11320284">
        <id>Q9NQX0</id>
        <label>PRDM6</label>
    </interactant>
    <organismsDiffer>false</organismsDiffer>
    <experiments>3</experiments>
</comment>
<comment type="interaction">
    <interactant intactId="EBI-1053725">
        <id>P10606</id>
    </interactant>
    <interactant intactId="EBI-2805516">
        <id>P31321</id>
        <label>PRKAR1B</label>
    </interactant>
    <organismsDiffer>false</organismsDiffer>
    <experiments>5</experiments>
</comment>
<comment type="interaction">
    <interactant intactId="EBI-1053725">
        <id>P10606</id>
    </interactant>
    <interactant intactId="EBI-473821">
        <id>Q5RL73</id>
        <label>RBM48</label>
    </interactant>
    <organismsDiffer>false</organismsDiffer>
    <experiments>3</experiments>
</comment>
<comment type="interaction">
    <interactant intactId="EBI-1053725">
        <id>P10606</id>
    </interactant>
    <interactant intactId="EBI-12000762">
        <id>Q7Z5V6-2</id>
        <label>SAXO4</label>
    </interactant>
    <organismsDiffer>false</organismsDiffer>
    <experiments>3</experiments>
</comment>
<comment type="interaction">
    <interactant intactId="EBI-1053725">
        <id>P10606</id>
    </interactant>
    <interactant intactId="EBI-10269374">
        <id>Q8ND83</id>
        <label>SLAIN1</label>
    </interactant>
    <organismsDiffer>false</organismsDiffer>
    <experiments>3</experiments>
</comment>
<comment type="interaction">
    <interactant intactId="EBI-1053725">
        <id>P10606</id>
    </interactant>
    <interactant intactId="EBI-745958">
        <id>Q5VWN6</id>
        <label>TASOR2</label>
    </interactant>
    <organismsDiffer>false</organismsDiffer>
    <experiments>4</experiments>
</comment>
<comment type="interaction">
    <interactant intactId="EBI-1053725">
        <id>P10606</id>
    </interactant>
    <interactant intactId="EBI-12090309">
        <id>Q9BXU0</id>
        <label>TEX12</label>
    </interactant>
    <organismsDiffer>false</organismsDiffer>
    <experiments>3</experiments>
</comment>
<comment type="interaction">
    <interactant intactId="EBI-1053725">
        <id>P10606</id>
    </interactant>
    <interactant intactId="EBI-1105213">
        <id>Q9UBB9</id>
        <label>TFIP11</label>
    </interactant>
    <organismsDiffer>false</organismsDiffer>
    <experiments>5</experiments>
</comment>
<comment type="interaction">
    <interactant intactId="EBI-1053725">
        <id>P10606</id>
    </interactant>
    <interactant intactId="EBI-359224">
        <id>Q13077</id>
        <label>TRAF1</label>
    </interactant>
    <organismsDiffer>false</organismsDiffer>
    <experiments>3</experiments>
</comment>
<comment type="interaction">
    <interactant intactId="EBI-1053725">
        <id>P10606</id>
    </interactant>
    <interactant intactId="EBI-740098">
        <id>P36406</id>
        <label>TRIM23</label>
    </interactant>
    <organismsDiffer>false</organismsDiffer>
    <experiments>5</experiments>
</comment>
<comment type="interaction">
    <interactant intactId="EBI-1053725">
        <id>P10606</id>
    </interactant>
    <interactant intactId="EBI-719493">
        <id>P14373</id>
        <label>TRIM27</label>
    </interactant>
    <organismsDiffer>false</organismsDiffer>
    <experiments>3</experiments>
</comment>
<comment type="interaction">
    <interactant intactId="EBI-1053725">
        <id>P10606</id>
    </interactant>
    <interactant intactId="EBI-12146727">
        <id>Q9UK41-2</id>
        <label>VPS28</label>
    </interactant>
    <organismsDiffer>false</organismsDiffer>
    <experiments>3</experiments>
</comment>
<comment type="subcellular location">
    <subcellularLocation>
        <location evidence="5">Mitochondrion inner membrane</location>
        <topology evidence="5">Peripheral membrane protein</topology>
        <orientation evidence="5">Matrix side</orientation>
    </subcellularLocation>
</comment>
<comment type="similarity">
    <text evidence="7">Belongs to the cytochrome c oxidase subunit 5B family.</text>
</comment>
<keyword id="KW-0002">3D-structure</keyword>
<keyword id="KW-0007">Acetylation</keyword>
<keyword id="KW-0903">Direct protein sequencing</keyword>
<keyword id="KW-0472">Membrane</keyword>
<keyword id="KW-0479">Metal-binding</keyword>
<keyword id="KW-0496">Mitochondrion</keyword>
<keyword id="KW-0999">Mitochondrion inner membrane</keyword>
<keyword id="KW-1267">Proteomics identification</keyword>
<keyword id="KW-1185">Reference proteome</keyword>
<keyword id="KW-0809">Transit peptide</keyword>
<keyword id="KW-0862">Zinc</keyword>
<sequence>MASRLLRGAGTLAAQALRARGPSGAAAMRSMASGGGVPTDEEQATGLEREIMLAAKKGLDPYNVLAPKGASGTREDPNLVPSISNKRIVGCICEEDNTSVVWFWLHKGEAQRCPRCGAHYKLVPQQLAH</sequence>
<feature type="transit peptide" description="Mitochondrion" evidence="6 8">
    <location>
        <begin position="1"/>
        <end position="31"/>
    </location>
</feature>
<feature type="chain" id="PRO_0000006109" description="Cytochrome c oxidase subunit 5B, mitochondrial">
    <location>
        <begin position="32"/>
        <end position="129"/>
    </location>
</feature>
<feature type="binding site" evidence="1">
    <location>
        <position position="91"/>
    </location>
    <ligand>
        <name>Zn(2+)</name>
        <dbReference type="ChEBI" id="CHEBI:29105"/>
    </ligand>
</feature>
<feature type="binding site" evidence="1">
    <location>
        <position position="93"/>
    </location>
    <ligand>
        <name>Zn(2+)</name>
        <dbReference type="ChEBI" id="CHEBI:29105"/>
    </ligand>
</feature>
<feature type="binding site" evidence="1">
    <location>
        <position position="113"/>
    </location>
    <ligand>
        <name>Zn(2+)</name>
        <dbReference type="ChEBI" id="CHEBI:29105"/>
    </ligand>
</feature>
<feature type="binding site" evidence="1">
    <location>
        <position position="116"/>
    </location>
    <ligand>
        <name>Zn(2+)</name>
        <dbReference type="ChEBI" id="CHEBI:29105"/>
    </ligand>
</feature>
<feature type="modified residue" description="N6-acetyllysine" evidence="3">
    <location>
        <position position="68"/>
    </location>
</feature>
<feature type="modified residue" description="N6-acetyllysine" evidence="3">
    <location>
        <position position="86"/>
    </location>
</feature>
<feature type="modified residue" description="N6-acetyllysine" evidence="3">
    <location>
        <position position="121"/>
    </location>
</feature>
<feature type="sequence conflict" description="In Ref. 6; AAB19185." evidence="7" ref="6">
    <original>GV</original>
    <variation>TR</variation>
    <location>
        <begin position="36"/>
        <end position="37"/>
    </location>
</feature>
<feature type="sequence conflict" description="In Ref. 1; AAA52061/AAA52060." evidence="7" ref="1">
    <original>E</original>
    <variation>Q</variation>
    <location>
        <position position="109"/>
    </location>
</feature>
<proteinExistence type="evidence at protein level"/>
<protein>
    <recommendedName>
        <fullName>Cytochrome c oxidase subunit 5B, mitochondrial</fullName>
    </recommendedName>
    <alternativeName>
        <fullName>Cytochrome c oxidase polypeptide Vb</fullName>
    </alternativeName>
</protein>